<organism>
    <name type="scientific">Buchnera aphidicola subsp. Schlechtendalia chinensis</name>
    <dbReference type="NCBI Taxonomy" id="118110"/>
    <lineage>
        <taxon>Bacteria</taxon>
        <taxon>Pseudomonadati</taxon>
        <taxon>Pseudomonadota</taxon>
        <taxon>Gammaproteobacteria</taxon>
        <taxon>Enterobacterales</taxon>
        <taxon>Erwiniaceae</taxon>
        <taxon>Buchnera</taxon>
    </lineage>
</organism>
<gene>
    <name type="primary">hisH</name>
</gene>
<accession>Q84I54</accession>
<evidence type="ECO:0000250" key="1"/>
<evidence type="ECO:0000255" key="2">
    <source>
        <dbReference type="PROSITE-ProRule" id="PRU00605"/>
    </source>
</evidence>
<keyword id="KW-0028">Amino-acid biosynthesis</keyword>
<keyword id="KW-0963">Cytoplasm</keyword>
<keyword id="KW-0315">Glutamine amidotransferase</keyword>
<keyword id="KW-0368">Histidine biosynthesis</keyword>
<keyword id="KW-0378">Hydrolase</keyword>
<keyword id="KW-0456">Lyase</keyword>
<comment type="function">
    <text evidence="1">IGPS catalyzes the conversion of PRFAR and glutamine to IGP, AICAR and glutamate. The HisH subunit catalyzes the hydrolysis of glutamine to glutamate and ammonia as part of the synthesis of IGP and AICAR. The resulting ammonia molecule is channeled to the active site of HisF (By similarity).</text>
</comment>
<comment type="catalytic activity">
    <reaction>
        <text>5-[(5-phospho-1-deoxy-D-ribulos-1-ylimino)methylamino]-1-(5-phospho-beta-D-ribosyl)imidazole-4-carboxamide + L-glutamine = D-erythro-1-(imidazol-4-yl)glycerol 3-phosphate + 5-amino-1-(5-phospho-beta-D-ribosyl)imidazole-4-carboxamide + L-glutamate + H(+)</text>
        <dbReference type="Rhea" id="RHEA:24793"/>
        <dbReference type="ChEBI" id="CHEBI:15378"/>
        <dbReference type="ChEBI" id="CHEBI:29985"/>
        <dbReference type="ChEBI" id="CHEBI:58278"/>
        <dbReference type="ChEBI" id="CHEBI:58359"/>
        <dbReference type="ChEBI" id="CHEBI:58475"/>
        <dbReference type="ChEBI" id="CHEBI:58525"/>
        <dbReference type="EC" id="4.3.2.10"/>
    </reaction>
</comment>
<comment type="catalytic activity">
    <reaction>
        <text>L-glutamine + H2O = L-glutamate + NH4(+)</text>
        <dbReference type="Rhea" id="RHEA:15889"/>
        <dbReference type="ChEBI" id="CHEBI:15377"/>
        <dbReference type="ChEBI" id="CHEBI:28938"/>
        <dbReference type="ChEBI" id="CHEBI:29985"/>
        <dbReference type="ChEBI" id="CHEBI:58359"/>
        <dbReference type="EC" id="3.5.1.2"/>
    </reaction>
</comment>
<comment type="pathway">
    <text>Amino-acid biosynthesis; L-histidine biosynthesis; L-histidine from 5-phospho-alpha-D-ribose 1-diphosphate: step 5/9.</text>
</comment>
<comment type="subunit">
    <text evidence="1">Heterodimer of HisH and HisF.</text>
</comment>
<comment type="subcellular location">
    <subcellularLocation>
        <location evidence="1">Cytoplasm</location>
    </subcellularLocation>
</comment>
<dbReference type="EC" id="4.3.2.10"/>
<dbReference type="EC" id="3.5.1.2"/>
<dbReference type="EMBL" id="AF465526">
    <property type="protein sequence ID" value="AAO33044.1"/>
    <property type="molecule type" value="Genomic_DNA"/>
</dbReference>
<dbReference type="SMR" id="Q84I54"/>
<dbReference type="STRING" id="118110.XW81_00485"/>
<dbReference type="UniPathway" id="UPA00031">
    <property type="reaction ID" value="UER00010"/>
</dbReference>
<dbReference type="GO" id="GO:0005737">
    <property type="term" value="C:cytoplasm"/>
    <property type="evidence" value="ECO:0007669"/>
    <property type="project" value="UniProtKB-SubCell"/>
</dbReference>
<dbReference type="GO" id="GO:0004359">
    <property type="term" value="F:glutaminase activity"/>
    <property type="evidence" value="ECO:0007669"/>
    <property type="project" value="UniProtKB-EC"/>
</dbReference>
<dbReference type="GO" id="GO:0000107">
    <property type="term" value="F:imidazoleglycerol-phosphate synthase activity"/>
    <property type="evidence" value="ECO:0007669"/>
    <property type="project" value="TreeGrafter"/>
</dbReference>
<dbReference type="GO" id="GO:0016829">
    <property type="term" value="F:lyase activity"/>
    <property type="evidence" value="ECO:0007669"/>
    <property type="project" value="UniProtKB-KW"/>
</dbReference>
<dbReference type="GO" id="GO:0000105">
    <property type="term" value="P:L-histidine biosynthetic process"/>
    <property type="evidence" value="ECO:0007669"/>
    <property type="project" value="UniProtKB-UniPathway"/>
</dbReference>
<dbReference type="Gene3D" id="3.40.50.880">
    <property type="match status" value="1"/>
</dbReference>
<dbReference type="InterPro" id="IPR029062">
    <property type="entry name" value="Class_I_gatase-like"/>
</dbReference>
<dbReference type="InterPro" id="IPR017926">
    <property type="entry name" value="GATASE"/>
</dbReference>
<dbReference type="InterPro" id="IPR010139">
    <property type="entry name" value="Imidazole-glycPsynth_HisH"/>
</dbReference>
<dbReference type="NCBIfam" id="TIGR01855">
    <property type="entry name" value="IMP_synth_hisH"/>
    <property type="match status" value="1"/>
</dbReference>
<dbReference type="PANTHER" id="PTHR42701">
    <property type="entry name" value="IMIDAZOLE GLYCEROL PHOSPHATE SYNTHASE SUBUNIT HISH"/>
    <property type="match status" value="1"/>
</dbReference>
<dbReference type="PANTHER" id="PTHR42701:SF1">
    <property type="entry name" value="IMIDAZOLE GLYCEROL PHOSPHATE SYNTHASE SUBUNIT HISH"/>
    <property type="match status" value="1"/>
</dbReference>
<dbReference type="Pfam" id="PF00117">
    <property type="entry name" value="GATase"/>
    <property type="match status" value="1"/>
</dbReference>
<dbReference type="PIRSF" id="PIRSF000495">
    <property type="entry name" value="Amidotransf_hisH"/>
    <property type="match status" value="1"/>
</dbReference>
<dbReference type="SUPFAM" id="SSF52317">
    <property type="entry name" value="Class I glutamine amidotransferase-like"/>
    <property type="match status" value="1"/>
</dbReference>
<dbReference type="PROSITE" id="PS51273">
    <property type="entry name" value="GATASE_TYPE_1"/>
    <property type="match status" value="1"/>
</dbReference>
<sequence length="174" mass="19611">MSVVIINTGCANLSSVKYAIHRLGYNPVISTSRREILRSKKIFFPGVGTAHSAMHALKKLNLLNIIKDVQQPFLGICLGMQLLGSYSEESQGMHTLDIINFPVCALKSEKFPVPHNGWNNVEVCKNNILFNGIKNNSKFYFLHSYVVHVNEYTIAKTAYNICFSAAVNKDNFWR</sequence>
<feature type="chain" id="PRO_0000152359" description="Imidazole glycerol phosphate synthase subunit HisH">
    <location>
        <begin position="1"/>
        <end position="174" status="greater than"/>
    </location>
</feature>
<feature type="domain" description="Glutamine amidotransferase type-1" evidence="2">
    <location>
        <begin position="2"/>
        <end position="174" status="greater than"/>
    </location>
</feature>
<feature type="active site" description="Nucleophile" evidence="2">
    <location>
        <position position="77"/>
    </location>
</feature>
<feature type="non-terminal residue">
    <location>
        <position position="174"/>
    </location>
</feature>
<name>HIS5_BUCSC</name>
<reference key="1">
    <citation type="submission" date="2002-01" db="EMBL/GenBank/DDBJ databases">
        <title>Levels of selection on genes of mutualistic endosymbionts.</title>
        <authorList>
            <person name="Moran N.A."/>
            <person name="Mira A."/>
        </authorList>
    </citation>
    <scope>NUCLEOTIDE SEQUENCE [GENOMIC DNA]</scope>
</reference>
<protein>
    <recommendedName>
        <fullName>Imidazole glycerol phosphate synthase subunit HisH</fullName>
        <ecNumber>4.3.2.10</ecNumber>
    </recommendedName>
    <alternativeName>
        <fullName>IGP synthase glutaminase subunit</fullName>
        <ecNumber>3.5.1.2</ecNumber>
    </alternativeName>
    <alternativeName>
        <fullName>IGP synthase subunit HisH</fullName>
    </alternativeName>
    <alternativeName>
        <fullName>ImGP synthase subunit HisH</fullName>
        <shortName>IGPS subunit HisH</shortName>
    </alternativeName>
</protein>
<proteinExistence type="inferred from homology"/>